<comment type="function">
    <text evidence="1">Catalyzes the conversion of L-lactate to pyruvate. Is coupled to the respiratory chain.</text>
</comment>
<comment type="catalytic activity">
    <reaction evidence="1">
        <text>(S)-lactate + A = pyruvate + AH2</text>
        <dbReference type="Rhea" id="RHEA:45816"/>
        <dbReference type="ChEBI" id="CHEBI:13193"/>
        <dbReference type="ChEBI" id="CHEBI:15361"/>
        <dbReference type="ChEBI" id="CHEBI:16651"/>
        <dbReference type="ChEBI" id="CHEBI:17499"/>
    </reaction>
</comment>
<comment type="cofactor">
    <cofactor evidence="1">
        <name>FMN</name>
        <dbReference type="ChEBI" id="CHEBI:58210"/>
    </cofactor>
</comment>
<comment type="subcellular location">
    <subcellularLocation>
        <location evidence="1">Cell inner membrane</location>
        <topology evidence="1">Peripheral membrane protein</topology>
    </subcellularLocation>
</comment>
<comment type="similarity">
    <text evidence="1">Belongs to the FMN-dependent alpha-hydroxy acid dehydrogenase family.</text>
</comment>
<evidence type="ECO:0000255" key="1">
    <source>
        <dbReference type="HAMAP-Rule" id="MF_01559"/>
    </source>
</evidence>
<organism>
    <name type="scientific">Salmonella heidelberg (strain SL476)</name>
    <dbReference type="NCBI Taxonomy" id="454169"/>
    <lineage>
        <taxon>Bacteria</taxon>
        <taxon>Pseudomonadati</taxon>
        <taxon>Pseudomonadota</taxon>
        <taxon>Gammaproteobacteria</taxon>
        <taxon>Enterobacterales</taxon>
        <taxon>Enterobacteriaceae</taxon>
        <taxon>Salmonella</taxon>
    </lineage>
</organism>
<name>LLDD_SALHS</name>
<keyword id="KW-0997">Cell inner membrane</keyword>
<keyword id="KW-1003">Cell membrane</keyword>
<keyword id="KW-0285">Flavoprotein</keyword>
<keyword id="KW-0288">FMN</keyword>
<keyword id="KW-0472">Membrane</keyword>
<keyword id="KW-0560">Oxidoreductase</keyword>
<accession>B4T986</accession>
<gene>
    <name evidence="1" type="primary">lldD</name>
    <name type="ordered locus">SeHA_C4018</name>
</gene>
<dbReference type="EC" id="1.1.-.-" evidence="1"/>
<dbReference type="EMBL" id="CP001120">
    <property type="protein sequence ID" value="ACF65832.1"/>
    <property type="molecule type" value="Genomic_DNA"/>
</dbReference>
<dbReference type="RefSeq" id="WP_000586997.1">
    <property type="nucleotide sequence ID" value="NC_011083.1"/>
</dbReference>
<dbReference type="SMR" id="B4T986"/>
<dbReference type="KEGG" id="seh:SeHA_C4018"/>
<dbReference type="HOGENOM" id="CLU_020639_0_0_6"/>
<dbReference type="Proteomes" id="UP000001866">
    <property type="component" value="Chromosome"/>
</dbReference>
<dbReference type="GO" id="GO:0005886">
    <property type="term" value="C:plasma membrane"/>
    <property type="evidence" value="ECO:0007669"/>
    <property type="project" value="UniProtKB-SubCell"/>
</dbReference>
<dbReference type="GO" id="GO:0010181">
    <property type="term" value="F:FMN binding"/>
    <property type="evidence" value="ECO:0007669"/>
    <property type="project" value="InterPro"/>
</dbReference>
<dbReference type="GO" id="GO:0004459">
    <property type="term" value="F:L-lactate dehydrogenase activity"/>
    <property type="evidence" value="ECO:0007669"/>
    <property type="project" value="UniProtKB-UniRule"/>
</dbReference>
<dbReference type="GO" id="GO:0009060">
    <property type="term" value="P:aerobic respiration"/>
    <property type="evidence" value="ECO:0007669"/>
    <property type="project" value="TreeGrafter"/>
</dbReference>
<dbReference type="GO" id="GO:0006089">
    <property type="term" value="P:lactate metabolic process"/>
    <property type="evidence" value="ECO:0007669"/>
    <property type="project" value="UniProtKB-UniRule"/>
</dbReference>
<dbReference type="CDD" id="cd02809">
    <property type="entry name" value="alpha_hydroxyacid_oxid_FMN"/>
    <property type="match status" value="1"/>
</dbReference>
<dbReference type="FunFam" id="3.20.20.70:FF:000029">
    <property type="entry name" value="L-lactate dehydrogenase"/>
    <property type="match status" value="1"/>
</dbReference>
<dbReference type="Gene3D" id="3.20.20.70">
    <property type="entry name" value="Aldolase class I"/>
    <property type="match status" value="1"/>
</dbReference>
<dbReference type="HAMAP" id="MF_01559">
    <property type="entry name" value="L_lact_dehydr"/>
    <property type="match status" value="1"/>
</dbReference>
<dbReference type="InterPro" id="IPR013785">
    <property type="entry name" value="Aldolase_TIM"/>
</dbReference>
<dbReference type="InterPro" id="IPR012133">
    <property type="entry name" value="Alpha-hydoxy_acid_DH_FMN"/>
</dbReference>
<dbReference type="InterPro" id="IPR000262">
    <property type="entry name" value="FMN-dep_DH"/>
</dbReference>
<dbReference type="InterPro" id="IPR037396">
    <property type="entry name" value="FMN_HAD"/>
</dbReference>
<dbReference type="InterPro" id="IPR008259">
    <property type="entry name" value="FMN_hydac_DH_AS"/>
</dbReference>
<dbReference type="InterPro" id="IPR020920">
    <property type="entry name" value="LldD"/>
</dbReference>
<dbReference type="NCBIfam" id="NF033901">
    <property type="entry name" value="L_lactate_LldD"/>
    <property type="match status" value="1"/>
</dbReference>
<dbReference type="NCBIfam" id="NF008398">
    <property type="entry name" value="PRK11197.1"/>
    <property type="match status" value="1"/>
</dbReference>
<dbReference type="PANTHER" id="PTHR10578:SF85">
    <property type="entry name" value="L-LACTATE DEHYDROGENASE"/>
    <property type="match status" value="1"/>
</dbReference>
<dbReference type="PANTHER" id="PTHR10578">
    <property type="entry name" value="S -2-HYDROXY-ACID OXIDASE-RELATED"/>
    <property type="match status" value="1"/>
</dbReference>
<dbReference type="Pfam" id="PF01070">
    <property type="entry name" value="FMN_dh"/>
    <property type="match status" value="1"/>
</dbReference>
<dbReference type="PIRSF" id="PIRSF000138">
    <property type="entry name" value="Al-hdrx_acd_dh"/>
    <property type="match status" value="1"/>
</dbReference>
<dbReference type="SUPFAM" id="SSF51395">
    <property type="entry name" value="FMN-linked oxidoreductases"/>
    <property type="match status" value="1"/>
</dbReference>
<dbReference type="PROSITE" id="PS00557">
    <property type="entry name" value="FMN_HYDROXY_ACID_DH_1"/>
    <property type="match status" value="1"/>
</dbReference>
<dbReference type="PROSITE" id="PS51349">
    <property type="entry name" value="FMN_HYDROXY_ACID_DH_2"/>
    <property type="match status" value="1"/>
</dbReference>
<protein>
    <recommendedName>
        <fullName evidence="1">L-lactate dehydrogenase</fullName>
        <ecNumber evidence="1">1.1.-.-</ecNumber>
    </recommendedName>
</protein>
<reference key="1">
    <citation type="journal article" date="2011" name="J. Bacteriol.">
        <title>Comparative genomics of 28 Salmonella enterica isolates: evidence for CRISPR-mediated adaptive sublineage evolution.</title>
        <authorList>
            <person name="Fricke W.F."/>
            <person name="Mammel M.K."/>
            <person name="McDermott P.F."/>
            <person name="Tartera C."/>
            <person name="White D.G."/>
            <person name="Leclerc J.E."/>
            <person name="Ravel J."/>
            <person name="Cebula T.A."/>
        </authorList>
    </citation>
    <scope>NUCLEOTIDE SEQUENCE [LARGE SCALE GENOMIC DNA]</scope>
    <source>
        <strain>SL476</strain>
    </source>
</reference>
<sequence>MIISAASDYRAAAQRTLPPFLFHYIDGGAYAEYTLRRNVEDLSQVALRQRVLKNMSDLSLETTLFNETLSMPVALAPVGLCGMYARRGEVQAAAAADAKGIPFTLSTVSVCPIEEVAPTIQRPMWFQLYVLRDRGFMRNALERAKAAGCSTLVFTVDMPTPGARYRDAHSGMSGPNAAMRRYWQAVMHPKWAWDVGLNGRPHDLGNISAYLGKPTGLEDYIGWLANNFDPSISWKDLEWIREFWDGPMVIKGILDPEDARDAVRFGADGIVVSNHGGRQLDGVLSSARALPAIADAVKGDIAILADSGIRNGLDVVRMIALGADTVLLGRAYLYALATAGKAGVANLLDLIEKEMKVAMTLTGAKSISEISGDSLVQELGRSLPAALAPMSKGDAA</sequence>
<feature type="chain" id="PRO_0000383442" description="L-lactate dehydrogenase">
    <location>
        <begin position="1"/>
        <end position="396"/>
    </location>
</feature>
<feature type="domain" description="FMN hydroxy acid dehydrogenase" evidence="1">
    <location>
        <begin position="1"/>
        <end position="380"/>
    </location>
</feature>
<feature type="active site" description="Proton acceptor" evidence="1">
    <location>
        <position position="275"/>
    </location>
</feature>
<feature type="binding site" evidence="1">
    <location>
        <position position="24"/>
    </location>
    <ligand>
        <name>substrate</name>
    </ligand>
</feature>
<feature type="binding site" evidence="1">
    <location>
        <position position="106"/>
    </location>
    <ligand>
        <name>FMN</name>
        <dbReference type="ChEBI" id="CHEBI:58210"/>
    </ligand>
</feature>
<feature type="binding site" evidence="1">
    <location>
        <position position="127"/>
    </location>
    <ligand>
        <name>FMN</name>
        <dbReference type="ChEBI" id="CHEBI:58210"/>
    </ligand>
</feature>
<feature type="binding site" evidence="1">
    <location>
        <position position="129"/>
    </location>
    <ligand>
        <name>substrate</name>
    </ligand>
</feature>
<feature type="binding site" evidence="1">
    <location>
        <position position="155"/>
    </location>
    <ligand>
        <name>FMN</name>
        <dbReference type="ChEBI" id="CHEBI:58210"/>
    </ligand>
</feature>
<feature type="binding site" evidence="1">
    <location>
        <position position="164"/>
    </location>
    <ligand>
        <name>substrate</name>
    </ligand>
</feature>
<feature type="binding site" evidence="1">
    <location>
        <position position="251"/>
    </location>
    <ligand>
        <name>FMN</name>
        <dbReference type="ChEBI" id="CHEBI:58210"/>
    </ligand>
</feature>
<feature type="binding site" evidence="1">
    <location>
        <position position="278"/>
    </location>
    <ligand>
        <name>substrate</name>
    </ligand>
</feature>
<feature type="binding site" evidence="1">
    <location>
        <begin position="306"/>
        <end position="330"/>
    </location>
    <ligand>
        <name>FMN</name>
        <dbReference type="ChEBI" id="CHEBI:58210"/>
    </ligand>
</feature>
<proteinExistence type="inferred from homology"/>